<keyword id="KW-1185">Reference proteome</keyword>
<sequence>MSHNKMENNDCICGNNSQPIENNKCSISFIVNDYINTKNTNTAPTTNNNNNNNNSSRDFFDPLTNSNRRCYVINFLNSVCYIRNQPYNIIIHRNAIEKICDCRIFIANEISIYNSLKTKDDLFLNMINLTSFINDCVTELIFLDSFQSSLVIDIQMFSNEIGTRNVPNRKIPTPVLPPLVSDNNSTNLQNQISSQTITSQSPHINNNNTITDANLFPRKRRLNVNNYIVKETMELSKKLRTTNQTSDDYNTPKIIRKLKLRPGDCYMCPNIESNNWRNFIFNGQHITLCNACGLRMIKINKKEKEIQNSMFTTR</sequence>
<organism>
    <name type="scientific">Dictyostelium discoideum</name>
    <name type="common">Social amoeba</name>
    <dbReference type="NCBI Taxonomy" id="44689"/>
    <lineage>
        <taxon>Eukaryota</taxon>
        <taxon>Amoebozoa</taxon>
        <taxon>Evosea</taxon>
        <taxon>Eumycetozoa</taxon>
        <taxon>Dictyostelia</taxon>
        <taxon>Dictyosteliales</taxon>
        <taxon>Dictyosteliaceae</taxon>
        <taxon>Dictyostelium</taxon>
    </lineage>
</organism>
<reference key="1">
    <citation type="journal article" date="2005" name="Nature">
        <title>The genome of the social amoeba Dictyostelium discoideum.</title>
        <authorList>
            <person name="Eichinger L."/>
            <person name="Pachebat J.A."/>
            <person name="Gloeckner G."/>
            <person name="Rajandream M.A."/>
            <person name="Sucgang R."/>
            <person name="Berriman M."/>
            <person name="Song J."/>
            <person name="Olsen R."/>
            <person name="Szafranski K."/>
            <person name="Xu Q."/>
            <person name="Tunggal B."/>
            <person name="Kummerfeld S."/>
            <person name="Madera M."/>
            <person name="Konfortov B.A."/>
            <person name="Rivero F."/>
            <person name="Bankier A.T."/>
            <person name="Lehmann R."/>
            <person name="Hamlin N."/>
            <person name="Davies R."/>
            <person name="Gaudet P."/>
            <person name="Fey P."/>
            <person name="Pilcher K."/>
            <person name="Chen G."/>
            <person name="Saunders D."/>
            <person name="Sodergren E.J."/>
            <person name="Davis P."/>
            <person name="Kerhornou A."/>
            <person name="Nie X."/>
            <person name="Hall N."/>
            <person name="Anjard C."/>
            <person name="Hemphill L."/>
            <person name="Bason N."/>
            <person name="Farbrother P."/>
            <person name="Desany B."/>
            <person name="Just E."/>
            <person name="Morio T."/>
            <person name="Rost R."/>
            <person name="Churcher C.M."/>
            <person name="Cooper J."/>
            <person name="Haydock S."/>
            <person name="van Driessche N."/>
            <person name="Cronin A."/>
            <person name="Goodhead I."/>
            <person name="Muzny D.M."/>
            <person name="Mourier T."/>
            <person name="Pain A."/>
            <person name="Lu M."/>
            <person name="Harper D."/>
            <person name="Lindsay R."/>
            <person name="Hauser H."/>
            <person name="James K.D."/>
            <person name="Quiles M."/>
            <person name="Madan Babu M."/>
            <person name="Saito T."/>
            <person name="Buchrieser C."/>
            <person name="Wardroper A."/>
            <person name="Felder M."/>
            <person name="Thangavelu M."/>
            <person name="Johnson D."/>
            <person name="Knights A."/>
            <person name="Loulseged H."/>
            <person name="Mungall K.L."/>
            <person name="Oliver K."/>
            <person name="Price C."/>
            <person name="Quail M.A."/>
            <person name="Urushihara H."/>
            <person name="Hernandez J."/>
            <person name="Rabbinowitsch E."/>
            <person name="Steffen D."/>
            <person name="Sanders M."/>
            <person name="Ma J."/>
            <person name="Kohara Y."/>
            <person name="Sharp S."/>
            <person name="Simmonds M.N."/>
            <person name="Spiegler S."/>
            <person name="Tivey A."/>
            <person name="Sugano S."/>
            <person name="White B."/>
            <person name="Walker D."/>
            <person name="Woodward J.R."/>
            <person name="Winckler T."/>
            <person name="Tanaka Y."/>
            <person name="Shaulsky G."/>
            <person name="Schleicher M."/>
            <person name="Weinstock G.M."/>
            <person name="Rosenthal A."/>
            <person name="Cox E.C."/>
            <person name="Chisholm R.L."/>
            <person name="Gibbs R.A."/>
            <person name="Loomis W.F."/>
            <person name="Platzer M."/>
            <person name="Kay R.R."/>
            <person name="Williams J.G."/>
            <person name="Dear P.H."/>
            <person name="Noegel A.A."/>
            <person name="Barrell B.G."/>
            <person name="Kuspa A."/>
        </authorList>
    </citation>
    <scope>NUCLEOTIDE SEQUENCE [LARGE SCALE GENOMIC DNA]</scope>
    <source>
        <strain>AX4</strain>
    </source>
</reference>
<feature type="chain" id="PRO_0000330452" description="GATA zinc finger domain-containing protein 19">
    <location>
        <begin position="1"/>
        <end position="314"/>
    </location>
</feature>
<protein>
    <recommendedName>
        <fullName>GATA zinc finger domain-containing protein 19</fullName>
    </recommendedName>
</protein>
<dbReference type="EMBL" id="AAFI02000037">
    <property type="protein sequence ID" value="EAL67115.3"/>
    <property type="molecule type" value="Genomic_DNA"/>
</dbReference>
<dbReference type="RefSeq" id="XP_641087.3">
    <property type="nucleotide sequence ID" value="XM_635995.3"/>
</dbReference>
<dbReference type="STRING" id="44689.Q54V44"/>
<dbReference type="PaxDb" id="44689-DDB0304731"/>
<dbReference type="EnsemblProtists" id="EAL67115">
    <property type="protein sequence ID" value="EAL67115"/>
    <property type="gene ID" value="DDB_G0280627"/>
</dbReference>
<dbReference type="GeneID" id="8622647"/>
<dbReference type="KEGG" id="ddi:DDB_G0280627"/>
<dbReference type="dictyBase" id="DDB_G0280627">
    <property type="gene designation" value="gtaS"/>
</dbReference>
<dbReference type="VEuPathDB" id="AmoebaDB:DDB_G0280627"/>
<dbReference type="HOGENOM" id="CLU_886878_0_0_1"/>
<dbReference type="InParanoid" id="Q54V44"/>
<dbReference type="PRO" id="PR:Q54V44"/>
<dbReference type="Proteomes" id="UP000002195">
    <property type="component" value="Chromosome 3"/>
</dbReference>
<dbReference type="GO" id="GO:0008270">
    <property type="term" value="F:zinc ion binding"/>
    <property type="evidence" value="ECO:0007669"/>
    <property type="project" value="InterPro"/>
</dbReference>
<dbReference type="GO" id="GO:0006355">
    <property type="term" value="P:regulation of DNA-templated transcription"/>
    <property type="evidence" value="ECO:0007669"/>
    <property type="project" value="InterPro"/>
</dbReference>
<dbReference type="Gene3D" id="3.30.50.10">
    <property type="entry name" value="Erythroid Transcription Factor GATA-1, subunit A"/>
    <property type="match status" value="1"/>
</dbReference>
<dbReference type="InterPro" id="IPR013088">
    <property type="entry name" value="Znf_NHR/GATA"/>
</dbReference>
<dbReference type="SUPFAM" id="SSF57716">
    <property type="entry name" value="Glucocorticoid receptor-like (DNA-binding domain)"/>
    <property type="match status" value="1"/>
</dbReference>
<name>GTAS_DICDI</name>
<gene>
    <name type="primary">gtaS</name>
    <name type="ORF">DDB_G0280627</name>
</gene>
<accession>Q54V44</accession>
<proteinExistence type="predicted"/>